<organism>
    <name type="scientific">Bacillus subtilis (strain 168)</name>
    <dbReference type="NCBI Taxonomy" id="224308"/>
    <lineage>
        <taxon>Bacteria</taxon>
        <taxon>Bacillati</taxon>
        <taxon>Bacillota</taxon>
        <taxon>Bacilli</taxon>
        <taxon>Bacillales</taxon>
        <taxon>Bacillaceae</taxon>
        <taxon>Bacillus</taxon>
    </lineage>
</organism>
<keyword id="KW-1003">Cell membrane</keyword>
<keyword id="KW-0178">Competence</keyword>
<keyword id="KW-0472">Membrane</keyword>
<keyword id="KW-0571">Peptide transport</keyword>
<keyword id="KW-0653">Protein transport</keyword>
<keyword id="KW-1185">Reference proteome</keyword>
<keyword id="KW-0749">Sporulation</keyword>
<keyword id="KW-0812">Transmembrane</keyword>
<keyword id="KW-1133">Transmembrane helix</keyword>
<keyword id="KW-0813">Transport</keyword>
<reference key="1">
    <citation type="journal article" date="1994" name="Mol. Microbiol.">
        <title>Identification of a second oligopeptide transport system in Bacillus subtilis and determination of its role in sporulation.</title>
        <authorList>
            <person name="Koide A."/>
            <person name="Hoch J.A."/>
        </authorList>
    </citation>
    <scope>NUCLEOTIDE SEQUENCE [GENOMIC DNA]</scope>
    <source>
        <strain>168</strain>
    </source>
</reference>
<reference key="2">
    <citation type="journal article" date="1997" name="Nature">
        <title>The complete genome sequence of the Gram-positive bacterium Bacillus subtilis.</title>
        <authorList>
            <person name="Kunst F."/>
            <person name="Ogasawara N."/>
            <person name="Moszer I."/>
            <person name="Albertini A.M."/>
            <person name="Alloni G."/>
            <person name="Azevedo V."/>
            <person name="Bertero M.G."/>
            <person name="Bessieres P."/>
            <person name="Bolotin A."/>
            <person name="Borchert S."/>
            <person name="Borriss R."/>
            <person name="Boursier L."/>
            <person name="Brans A."/>
            <person name="Braun M."/>
            <person name="Brignell S.C."/>
            <person name="Bron S."/>
            <person name="Brouillet S."/>
            <person name="Bruschi C.V."/>
            <person name="Caldwell B."/>
            <person name="Capuano V."/>
            <person name="Carter N.M."/>
            <person name="Choi S.-K."/>
            <person name="Codani J.-J."/>
            <person name="Connerton I.F."/>
            <person name="Cummings N.J."/>
            <person name="Daniel R.A."/>
            <person name="Denizot F."/>
            <person name="Devine K.M."/>
            <person name="Duesterhoeft A."/>
            <person name="Ehrlich S.D."/>
            <person name="Emmerson P.T."/>
            <person name="Entian K.-D."/>
            <person name="Errington J."/>
            <person name="Fabret C."/>
            <person name="Ferrari E."/>
            <person name="Foulger D."/>
            <person name="Fritz C."/>
            <person name="Fujita M."/>
            <person name="Fujita Y."/>
            <person name="Fuma S."/>
            <person name="Galizzi A."/>
            <person name="Galleron N."/>
            <person name="Ghim S.-Y."/>
            <person name="Glaser P."/>
            <person name="Goffeau A."/>
            <person name="Golightly E.J."/>
            <person name="Grandi G."/>
            <person name="Guiseppi G."/>
            <person name="Guy B.J."/>
            <person name="Haga K."/>
            <person name="Haiech J."/>
            <person name="Harwood C.R."/>
            <person name="Henaut A."/>
            <person name="Hilbert H."/>
            <person name="Holsappel S."/>
            <person name="Hosono S."/>
            <person name="Hullo M.-F."/>
            <person name="Itaya M."/>
            <person name="Jones L.-M."/>
            <person name="Joris B."/>
            <person name="Karamata D."/>
            <person name="Kasahara Y."/>
            <person name="Klaerr-Blanchard M."/>
            <person name="Klein C."/>
            <person name="Kobayashi Y."/>
            <person name="Koetter P."/>
            <person name="Koningstein G."/>
            <person name="Krogh S."/>
            <person name="Kumano M."/>
            <person name="Kurita K."/>
            <person name="Lapidus A."/>
            <person name="Lardinois S."/>
            <person name="Lauber J."/>
            <person name="Lazarevic V."/>
            <person name="Lee S.-M."/>
            <person name="Levine A."/>
            <person name="Liu H."/>
            <person name="Masuda S."/>
            <person name="Mauel C."/>
            <person name="Medigue C."/>
            <person name="Medina N."/>
            <person name="Mellado R.P."/>
            <person name="Mizuno M."/>
            <person name="Moestl D."/>
            <person name="Nakai S."/>
            <person name="Noback M."/>
            <person name="Noone D."/>
            <person name="O'Reilly M."/>
            <person name="Ogawa K."/>
            <person name="Ogiwara A."/>
            <person name="Oudega B."/>
            <person name="Park S.-H."/>
            <person name="Parro V."/>
            <person name="Pohl T.M."/>
            <person name="Portetelle D."/>
            <person name="Porwollik S."/>
            <person name="Prescott A.M."/>
            <person name="Presecan E."/>
            <person name="Pujic P."/>
            <person name="Purnelle B."/>
            <person name="Rapoport G."/>
            <person name="Rey M."/>
            <person name="Reynolds S."/>
            <person name="Rieger M."/>
            <person name="Rivolta C."/>
            <person name="Rocha E."/>
            <person name="Roche B."/>
            <person name="Rose M."/>
            <person name="Sadaie Y."/>
            <person name="Sato T."/>
            <person name="Scanlan E."/>
            <person name="Schleich S."/>
            <person name="Schroeter R."/>
            <person name="Scoffone F."/>
            <person name="Sekiguchi J."/>
            <person name="Sekowska A."/>
            <person name="Seror S.J."/>
            <person name="Serror P."/>
            <person name="Shin B.-S."/>
            <person name="Soldo B."/>
            <person name="Sorokin A."/>
            <person name="Tacconi E."/>
            <person name="Takagi T."/>
            <person name="Takahashi H."/>
            <person name="Takemaru K."/>
            <person name="Takeuchi M."/>
            <person name="Tamakoshi A."/>
            <person name="Tanaka T."/>
            <person name="Terpstra P."/>
            <person name="Tognoni A."/>
            <person name="Tosato V."/>
            <person name="Uchiyama S."/>
            <person name="Vandenbol M."/>
            <person name="Vannier F."/>
            <person name="Vassarotti A."/>
            <person name="Viari A."/>
            <person name="Wambutt R."/>
            <person name="Wedler E."/>
            <person name="Wedler H."/>
            <person name="Weitzenegger T."/>
            <person name="Winters P."/>
            <person name="Wipat A."/>
            <person name="Yamamoto H."/>
            <person name="Yamane K."/>
            <person name="Yasumoto K."/>
            <person name="Yata K."/>
            <person name="Yoshida K."/>
            <person name="Yoshikawa H.-F."/>
            <person name="Zumstein E."/>
            <person name="Yoshikawa H."/>
            <person name="Danchin A."/>
        </authorList>
    </citation>
    <scope>NUCLEOTIDE SEQUENCE [LARGE SCALE GENOMIC DNA]</scope>
    <source>
        <strain>168</strain>
    </source>
</reference>
<reference key="3">
    <citation type="journal article" date="2009" name="Microbiology">
        <title>From a consortium sequence to a unified sequence: the Bacillus subtilis 168 reference genome a decade later.</title>
        <authorList>
            <person name="Barbe V."/>
            <person name="Cruveiller S."/>
            <person name="Kunst F."/>
            <person name="Lenoble P."/>
            <person name="Meurice G."/>
            <person name="Sekowska A."/>
            <person name="Vallenet D."/>
            <person name="Wang T."/>
            <person name="Moszer I."/>
            <person name="Medigue C."/>
            <person name="Danchin A."/>
        </authorList>
    </citation>
    <scope>SEQUENCE REVISION TO 281-284</scope>
</reference>
<accession>P42062</accession>
<feature type="chain" id="PRO_0000059949" description="Oligopeptide transport system permease protein AppB">
    <location>
        <begin position="1"/>
        <end position="316"/>
    </location>
</feature>
<feature type="transmembrane region" description="Helical" evidence="2">
    <location>
        <begin position="10"/>
        <end position="30"/>
    </location>
</feature>
<feature type="transmembrane region" description="Helical" evidence="2">
    <location>
        <begin position="100"/>
        <end position="120"/>
    </location>
</feature>
<feature type="transmembrane region" description="Helical" evidence="2">
    <location>
        <begin position="138"/>
        <end position="158"/>
    </location>
</feature>
<feature type="transmembrane region" description="Helical" evidence="2">
    <location>
        <begin position="177"/>
        <end position="197"/>
    </location>
</feature>
<feature type="transmembrane region" description="Helical" evidence="2">
    <location>
        <begin position="240"/>
        <end position="260"/>
    </location>
</feature>
<feature type="transmembrane region" description="Helical" evidence="2">
    <location>
        <begin position="290"/>
        <end position="310"/>
    </location>
</feature>
<feature type="domain" description="ABC transmembrane type-1" evidence="2">
    <location>
        <begin position="96"/>
        <end position="303"/>
    </location>
</feature>
<feature type="sequence conflict" description="In Ref. 1; AAA62359." evidence="3" ref="1">
    <original>DYPV</original>
    <variation>TIIRI</variation>
    <location>
        <begin position="281"/>
        <end position="284"/>
    </location>
</feature>
<sequence>MAAYIIRRTLMSIPILLGITILSFVIMKAAPGDPMTLMMDPKISQADREQFIEKYGLNDPQYVQYLKWLGNMVQGDFGTSIVRKGTPVSELIMARLPNTLLLMLVSTILALMISIPFGVLSAKRPYSKIDYGITFTSFIGLAIPNFWFGLILIMVLSVNLGWFPTGGVETLNTEFNIFDRIHHLILPAFVLATADMAGLTRYTRSNMLDVLNQDYIRTARAKGFKENRVLFKHGLRNALLPVITIFGLMIPSFIGGSVVVEQIFTWPGLGKLFVDSAFQRDYPVIMAMTVISAVLVVVGNLIADILYAIVDPRIEY</sequence>
<gene>
    <name type="primary">appB</name>
    <name type="ordered locus">BSU11390</name>
</gene>
<name>APPB_BACSU</name>
<comment type="function">
    <text evidence="1">This protein is a component of an oligopeptide permease, a binding protein-dependent transport system. This APP system can completely substitute for the OPP system in both sporulation and genetic competence, though, unlike OPP, is incapable of transporting tripeptides. Probably responsible for the translocation of the substrate across the membrane (By similarity).</text>
</comment>
<comment type="subcellular location">
    <subcellularLocation>
        <location evidence="3">Cell membrane</location>
        <topology evidence="2">Multi-pass membrane protein</topology>
    </subcellularLocation>
</comment>
<comment type="similarity">
    <text evidence="3">Belongs to the binding-protein-dependent transport system permease family. OppBC subfamily.</text>
</comment>
<evidence type="ECO:0000250" key="1"/>
<evidence type="ECO:0000255" key="2">
    <source>
        <dbReference type="PROSITE-ProRule" id="PRU00441"/>
    </source>
</evidence>
<evidence type="ECO:0000305" key="3"/>
<dbReference type="EMBL" id="U20909">
    <property type="protein sequence ID" value="AAA62359.1"/>
    <property type="molecule type" value="Genomic_DNA"/>
</dbReference>
<dbReference type="EMBL" id="AL009126">
    <property type="protein sequence ID" value="CAB12996.2"/>
    <property type="molecule type" value="Genomic_DNA"/>
</dbReference>
<dbReference type="PIR" id="I40546">
    <property type="entry name" value="I40546"/>
</dbReference>
<dbReference type="RefSeq" id="NP_389021.2">
    <property type="nucleotide sequence ID" value="NC_000964.3"/>
</dbReference>
<dbReference type="RefSeq" id="WP_003245828.1">
    <property type="nucleotide sequence ID" value="NZ_OZ025638.1"/>
</dbReference>
<dbReference type="SMR" id="P42062"/>
<dbReference type="FunCoup" id="P42062">
    <property type="interactions" value="232"/>
</dbReference>
<dbReference type="STRING" id="224308.BSU11390"/>
<dbReference type="TCDB" id="3.A.1.5.20">
    <property type="family name" value="the atp-binding cassette (abc) superfamily"/>
</dbReference>
<dbReference type="PaxDb" id="224308-BSU11390"/>
<dbReference type="EnsemblBacteria" id="CAB12996">
    <property type="protein sequence ID" value="CAB12996"/>
    <property type="gene ID" value="BSU_11390"/>
</dbReference>
<dbReference type="GeneID" id="936400"/>
<dbReference type="KEGG" id="bsu:BSU11390"/>
<dbReference type="PATRIC" id="fig|224308.179.peg.1225"/>
<dbReference type="eggNOG" id="COG0601">
    <property type="taxonomic scope" value="Bacteria"/>
</dbReference>
<dbReference type="InParanoid" id="P42062"/>
<dbReference type="OrthoDB" id="9773683at2"/>
<dbReference type="PhylomeDB" id="P42062"/>
<dbReference type="BioCyc" id="BSUB:BSU11390-MONOMER"/>
<dbReference type="Proteomes" id="UP000001570">
    <property type="component" value="Chromosome"/>
</dbReference>
<dbReference type="GO" id="GO:0005886">
    <property type="term" value="C:plasma membrane"/>
    <property type="evidence" value="ECO:0000318"/>
    <property type="project" value="GO_Central"/>
</dbReference>
<dbReference type="GO" id="GO:0022857">
    <property type="term" value="F:transmembrane transporter activity"/>
    <property type="evidence" value="ECO:0000318"/>
    <property type="project" value="GO_Central"/>
</dbReference>
<dbReference type="GO" id="GO:0030420">
    <property type="term" value="P:establishment of competence for transformation"/>
    <property type="evidence" value="ECO:0007669"/>
    <property type="project" value="UniProtKB-KW"/>
</dbReference>
<dbReference type="GO" id="GO:0015833">
    <property type="term" value="P:peptide transport"/>
    <property type="evidence" value="ECO:0007669"/>
    <property type="project" value="UniProtKB-KW"/>
</dbReference>
<dbReference type="GO" id="GO:0015031">
    <property type="term" value="P:protein transport"/>
    <property type="evidence" value="ECO:0007669"/>
    <property type="project" value="UniProtKB-KW"/>
</dbReference>
<dbReference type="GO" id="GO:0030435">
    <property type="term" value="P:sporulation resulting in formation of a cellular spore"/>
    <property type="evidence" value="ECO:0007669"/>
    <property type="project" value="UniProtKB-KW"/>
</dbReference>
<dbReference type="CDD" id="cd06261">
    <property type="entry name" value="TM_PBP2"/>
    <property type="match status" value="1"/>
</dbReference>
<dbReference type="Gene3D" id="1.10.3720.10">
    <property type="entry name" value="MetI-like"/>
    <property type="match status" value="1"/>
</dbReference>
<dbReference type="InterPro" id="IPR045621">
    <property type="entry name" value="BPD_transp_1_N"/>
</dbReference>
<dbReference type="InterPro" id="IPR000515">
    <property type="entry name" value="MetI-like"/>
</dbReference>
<dbReference type="InterPro" id="IPR035906">
    <property type="entry name" value="MetI-like_sf"/>
</dbReference>
<dbReference type="PANTHER" id="PTHR43163">
    <property type="entry name" value="DIPEPTIDE TRANSPORT SYSTEM PERMEASE PROTEIN DPPB-RELATED"/>
    <property type="match status" value="1"/>
</dbReference>
<dbReference type="PANTHER" id="PTHR43163:SF6">
    <property type="entry name" value="DIPEPTIDE TRANSPORT SYSTEM PERMEASE PROTEIN DPPB-RELATED"/>
    <property type="match status" value="1"/>
</dbReference>
<dbReference type="Pfam" id="PF00528">
    <property type="entry name" value="BPD_transp_1"/>
    <property type="match status" value="1"/>
</dbReference>
<dbReference type="Pfam" id="PF19300">
    <property type="entry name" value="BPD_transp_1_N"/>
    <property type="match status" value="1"/>
</dbReference>
<dbReference type="SUPFAM" id="SSF161098">
    <property type="entry name" value="MetI-like"/>
    <property type="match status" value="1"/>
</dbReference>
<dbReference type="PROSITE" id="PS50928">
    <property type="entry name" value="ABC_TM1"/>
    <property type="match status" value="1"/>
</dbReference>
<protein>
    <recommendedName>
        <fullName>Oligopeptide transport system permease protein AppB</fullName>
    </recommendedName>
</protein>
<proteinExistence type="inferred from homology"/>